<dbReference type="EMBL" id="AF178634">
    <property type="protein sequence ID" value="AAF72042.1"/>
    <property type="molecule type" value="mRNA"/>
</dbReference>
<dbReference type="EMBL" id="AF141131">
    <property type="protein sequence ID" value="AAF66591.1"/>
    <property type="molecule type" value="mRNA"/>
</dbReference>
<dbReference type="SMR" id="P82659"/>
<dbReference type="EnsemblPlants" id="mRNA:HanXRQr2_Chr12g0536651">
    <property type="protein sequence ID" value="mRNA:HanXRQr2_Chr12g0536651"/>
    <property type="gene ID" value="HanXRQr2_Chr12g0536651"/>
</dbReference>
<dbReference type="Gramene" id="mRNA:HanXRQr2_Chr12g0536651">
    <property type="protein sequence ID" value="mRNA:HanXRQr2_Chr12g0536651"/>
    <property type="gene ID" value="HanXRQr2_Chr12g0536651"/>
</dbReference>
<dbReference type="OrthoDB" id="683455at2759"/>
<dbReference type="GO" id="GO:0005576">
    <property type="term" value="C:extracellular region"/>
    <property type="evidence" value="ECO:0007669"/>
    <property type="project" value="UniProtKB-KW"/>
</dbReference>
<dbReference type="GO" id="GO:0050832">
    <property type="term" value="P:defense response to fungus"/>
    <property type="evidence" value="ECO:0007669"/>
    <property type="project" value="UniProtKB-KW"/>
</dbReference>
<dbReference type="GO" id="GO:0031640">
    <property type="term" value="P:killing of cells of another organism"/>
    <property type="evidence" value="ECO:0007669"/>
    <property type="project" value="UniProtKB-KW"/>
</dbReference>
<dbReference type="CDD" id="cd00107">
    <property type="entry name" value="Knot1"/>
    <property type="match status" value="1"/>
</dbReference>
<dbReference type="Gene3D" id="3.30.30.10">
    <property type="entry name" value="Knottin, scorpion toxin-like"/>
    <property type="match status" value="1"/>
</dbReference>
<dbReference type="InterPro" id="IPR008176">
    <property type="entry name" value="Defensin_plant"/>
</dbReference>
<dbReference type="InterPro" id="IPR003614">
    <property type="entry name" value="Scorpion_toxin-like"/>
</dbReference>
<dbReference type="InterPro" id="IPR036574">
    <property type="entry name" value="Scorpion_toxin-like_sf"/>
</dbReference>
<dbReference type="PANTHER" id="PTHR33147">
    <property type="entry name" value="DEFENSIN-LIKE PROTEIN 1"/>
    <property type="match status" value="1"/>
</dbReference>
<dbReference type="PANTHER" id="PTHR33147:SF129">
    <property type="entry name" value="DEFENSIN-LIKE PROTEIN 2-RELATED"/>
    <property type="match status" value="1"/>
</dbReference>
<dbReference type="Pfam" id="PF00304">
    <property type="entry name" value="Gamma-thionin"/>
    <property type="match status" value="1"/>
</dbReference>
<dbReference type="PRINTS" id="PR00288">
    <property type="entry name" value="PUROTHIONIN"/>
</dbReference>
<dbReference type="SMART" id="SM00505">
    <property type="entry name" value="Knot1"/>
    <property type="match status" value="1"/>
</dbReference>
<dbReference type="SUPFAM" id="SSF57095">
    <property type="entry name" value="Scorpion toxin-like"/>
    <property type="match status" value="1"/>
</dbReference>
<dbReference type="PROSITE" id="PS00940">
    <property type="entry name" value="GAMMA_THIONIN"/>
    <property type="match status" value="1"/>
</dbReference>
<evidence type="ECO:0000250" key="1"/>
<evidence type="ECO:0000255" key="2"/>
<evidence type="ECO:0000305" key="3"/>
<protein>
    <recommendedName>
        <fullName>Defensin SD2</fullName>
    </recommendedName>
    <alternativeName>
        <fullName>Flower-specific gamma-thionin</fullName>
    </alternativeName>
</protein>
<proteinExistence type="evidence at transcript level"/>
<keyword id="KW-0929">Antimicrobial</keyword>
<keyword id="KW-0134">Cell wall</keyword>
<keyword id="KW-1015">Disulfide bond</keyword>
<keyword id="KW-0295">Fungicide</keyword>
<keyword id="KW-0611">Plant defense</keyword>
<keyword id="KW-0964">Secreted</keyword>
<keyword id="KW-0732">Signal</keyword>
<sequence length="78" mass="8627">MKSSMKMFAALLLVVMCLLANEMGGPLVVEARTCESQSHKFKGTCLSDTNCANVCHSERFSGGKCRGFRRRCFCTTHC</sequence>
<organism>
    <name type="scientific">Helianthus annuus</name>
    <name type="common">Common sunflower</name>
    <dbReference type="NCBI Taxonomy" id="4232"/>
    <lineage>
        <taxon>Eukaryota</taxon>
        <taxon>Viridiplantae</taxon>
        <taxon>Streptophyta</taxon>
        <taxon>Embryophyta</taxon>
        <taxon>Tracheophyta</taxon>
        <taxon>Spermatophyta</taxon>
        <taxon>Magnoliopsida</taxon>
        <taxon>eudicotyledons</taxon>
        <taxon>Gunneridae</taxon>
        <taxon>Pentapetalae</taxon>
        <taxon>asterids</taxon>
        <taxon>campanulids</taxon>
        <taxon>Asterales</taxon>
        <taxon>Asteraceae</taxon>
        <taxon>Asteroideae</taxon>
        <taxon>Heliantheae alliance</taxon>
        <taxon>Heliantheae</taxon>
        <taxon>Helianthus</taxon>
    </lineage>
</organism>
<accession>P82659</accession>
<comment type="function">
    <text>May play a protective role in flowers by protecting the reproductive organs from potential pathogen attack.</text>
</comment>
<comment type="subcellular location">
    <subcellularLocation>
        <location evidence="1">Secreted</location>
        <location evidence="1">Cell wall</location>
    </subcellularLocation>
</comment>
<comment type="tissue specificity">
    <text>Highest expression in flowers and to a lesser extent in leaves. Lower levels in hypocotyls. No expression in roots and cotyledons.</text>
</comment>
<comment type="developmental stage">
    <text>Expressed progressively during flower development reaching the highest level in the mature fertilized flower stage.</text>
</comment>
<comment type="similarity">
    <text evidence="3">Belongs to the DEFL family.</text>
</comment>
<feature type="signal peptide" evidence="2">
    <location>
        <begin position="1"/>
        <end position="20"/>
    </location>
</feature>
<feature type="chain" id="PRO_0000007041" description="Defensin SD2">
    <location>
        <begin position="21"/>
        <end position="78"/>
    </location>
</feature>
<feature type="disulfide bond" evidence="1">
    <location>
        <begin position="34"/>
        <end position="78"/>
    </location>
</feature>
<feature type="disulfide bond" evidence="1">
    <location>
        <begin position="45"/>
        <end position="65"/>
    </location>
</feature>
<feature type="disulfide bond" evidence="1">
    <location>
        <begin position="51"/>
        <end position="72"/>
    </location>
</feature>
<feature type="disulfide bond" evidence="1">
    <location>
        <begin position="55"/>
        <end position="74"/>
    </location>
</feature>
<reference key="1">
    <citation type="journal article" date="2000" name="Plant Physiol. Biochem.">
        <title>A defensin gene expressed in sunflower inflorescence.</title>
        <authorList>
            <person name="Urdangarin M.C."/>
            <person name="de la Canal L."/>
        </authorList>
    </citation>
    <scope>NUCLEOTIDE SEQUENCE [MRNA]</scope>
    <source>
        <tissue>Flower</tissue>
    </source>
</reference>
<gene>
    <name type="primary">SD2</name>
</gene>
<name>DFSD2_HELAN</name>